<evidence type="ECO:0000255" key="1">
    <source>
        <dbReference type="HAMAP-Rule" id="MF_01543"/>
    </source>
</evidence>
<feature type="chain" id="PRO_0000199368" description="Formate--tetrahydrofolate ligase">
    <location>
        <begin position="1"/>
        <end position="555"/>
    </location>
</feature>
<gene>
    <name evidence="1" type="primary">fhs</name>
    <name type="ordered locus">PG_1321</name>
</gene>
<keyword id="KW-0067">ATP-binding</keyword>
<keyword id="KW-0436">Ligase</keyword>
<keyword id="KW-0547">Nucleotide-binding</keyword>
<keyword id="KW-0554">One-carbon metabolism</keyword>
<keyword id="KW-1185">Reference proteome</keyword>
<protein>
    <recommendedName>
        <fullName evidence="1">Formate--tetrahydrofolate ligase</fullName>
        <ecNumber evidence="1">6.3.4.3</ecNumber>
    </recommendedName>
    <alternativeName>
        <fullName evidence="1">Formyltetrahydrofolate synthetase</fullName>
        <shortName evidence="1">FHS</shortName>
        <shortName evidence="1">FTHFS</shortName>
    </alternativeName>
</protein>
<reference key="1">
    <citation type="journal article" date="2003" name="J. Bacteriol.">
        <title>Complete genome sequence of the oral pathogenic bacterium Porphyromonas gingivalis strain W83.</title>
        <authorList>
            <person name="Nelson K.E."/>
            <person name="Fleischmann R.D."/>
            <person name="DeBoy R.T."/>
            <person name="Paulsen I.T."/>
            <person name="Fouts D.E."/>
            <person name="Eisen J.A."/>
            <person name="Daugherty S.C."/>
            <person name="Dodson R.J."/>
            <person name="Durkin A.S."/>
            <person name="Gwinn M.L."/>
            <person name="Haft D.H."/>
            <person name="Kolonay J.F."/>
            <person name="Nelson W.C."/>
            <person name="Mason T.M."/>
            <person name="Tallon L."/>
            <person name="Gray J."/>
            <person name="Granger D."/>
            <person name="Tettelin H."/>
            <person name="Dong H."/>
            <person name="Galvin J.L."/>
            <person name="Duncan M.J."/>
            <person name="Dewhirst F.E."/>
            <person name="Fraser C.M."/>
        </authorList>
    </citation>
    <scope>NUCLEOTIDE SEQUENCE [LARGE SCALE GENOMIC DNA]</scope>
    <source>
        <strain>ATCC BAA-308 / W83</strain>
    </source>
</reference>
<name>FTHS_PORGI</name>
<proteinExistence type="inferred from homology"/>
<accession>Q7MUZ8</accession>
<comment type="catalytic activity">
    <reaction evidence="1">
        <text>(6S)-5,6,7,8-tetrahydrofolate + formate + ATP = (6R)-10-formyltetrahydrofolate + ADP + phosphate</text>
        <dbReference type="Rhea" id="RHEA:20221"/>
        <dbReference type="ChEBI" id="CHEBI:15740"/>
        <dbReference type="ChEBI" id="CHEBI:30616"/>
        <dbReference type="ChEBI" id="CHEBI:43474"/>
        <dbReference type="ChEBI" id="CHEBI:57453"/>
        <dbReference type="ChEBI" id="CHEBI:195366"/>
        <dbReference type="ChEBI" id="CHEBI:456216"/>
        <dbReference type="EC" id="6.3.4.3"/>
    </reaction>
</comment>
<comment type="pathway">
    <text evidence="1">One-carbon metabolism; tetrahydrofolate interconversion.</text>
</comment>
<comment type="similarity">
    <text evidence="1">Belongs to the formate--tetrahydrofolate ligase family.</text>
</comment>
<organism>
    <name type="scientific">Porphyromonas gingivalis (strain ATCC BAA-308 / W83)</name>
    <dbReference type="NCBI Taxonomy" id="242619"/>
    <lineage>
        <taxon>Bacteria</taxon>
        <taxon>Pseudomonadati</taxon>
        <taxon>Bacteroidota</taxon>
        <taxon>Bacteroidia</taxon>
        <taxon>Bacteroidales</taxon>
        <taxon>Porphyromonadaceae</taxon>
        <taxon>Porphyromonas</taxon>
    </lineage>
</organism>
<sequence>MKSDIQIARDIELQRIEQIAESIDLPVEQLEPYGRYTAKVPLSCIDEEKVKKGNLILVTAITPNKAGVGKTTVSIGLALGLNHIGKKAIVALREPSLGPCFGMKGGAAGGGYAQVLPMENINLHFTGDFHAVTSAHNMITALLENYIYQNRNTCDGLSEILWKRVLDVNDRSLRNAVTGLGTISDGIPRQTGFDITPASEIMAILCLAKDFEDLRSRLENILLGYTKEGAPFTVKDLGIAGSIAVLLKDAIKPNLVQTTEHTPAFVHGGPFANIAHGCNSILATKMALSFGEYAVTEAGFGADLGAEKFLDIKCREMGVAPKLTVLVATLRALKLHGGVAETEIKAPNAEALRRGLSNLDRHIYNLKKFGQQVIVAFNRFDTDEEEEISIVREHCIGQNVGFAVNNAFAEGGKGAEELAKLVVEMVENKPSQPLKYAYEPENPVKMKIEKIAKEIYSAGSVVYSSKADGKLKKIAMQSLDHLPVCIAKTQYSFSSDPKAKGDVRGFELKVSDIIINRGAGMLVVIIGEIMRMPGLPKEPQAVHIDIVDGFIEGLS</sequence>
<dbReference type="EC" id="6.3.4.3" evidence="1"/>
<dbReference type="EMBL" id="AE015924">
    <property type="protein sequence ID" value="AAQ66392.1"/>
    <property type="molecule type" value="Genomic_DNA"/>
</dbReference>
<dbReference type="RefSeq" id="WP_004585540.1">
    <property type="nucleotide sequence ID" value="NC_002950.2"/>
</dbReference>
<dbReference type="SMR" id="Q7MUZ8"/>
<dbReference type="STRING" id="242619.PG_1321"/>
<dbReference type="EnsemblBacteria" id="AAQ66392">
    <property type="protein sequence ID" value="AAQ66392"/>
    <property type="gene ID" value="PG_1321"/>
</dbReference>
<dbReference type="KEGG" id="pgi:PG_1321"/>
<dbReference type="eggNOG" id="COG2759">
    <property type="taxonomic scope" value="Bacteria"/>
</dbReference>
<dbReference type="HOGENOM" id="CLU_003601_3_3_10"/>
<dbReference type="UniPathway" id="UPA00193"/>
<dbReference type="Proteomes" id="UP000000588">
    <property type="component" value="Chromosome"/>
</dbReference>
<dbReference type="GO" id="GO:0005524">
    <property type="term" value="F:ATP binding"/>
    <property type="evidence" value="ECO:0007669"/>
    <property type="project" value="UniProtKB-UniRule"/>
</dbReference>
<dbReference type="GO" id="GO:0004329">
    <property type="term" value="F:formate-tetrahydrofolate ligase activity"/>
    <property type="evidence" value="ECO:0007669"/>
    <property type="project" value="UniProtKB-UniRule"/>
</dbReference>
<dbReference type="GO" id="GO:0035999">
    <property type="term" value="P:tetrahydrofolate interconversion"/>
    <property type="evidence" value="ECO:0007669"/>
    <property type="project" value="UniProtKB-UniRule"/>
</dbReference>
<dbReference type="CDD" id="cd00477">
    <property type="entry name" value="FTHFS"/>
    <property type="match status" value="1"/>
</dbReference>
<dbReference type="FunFam" id="3.30.1510.10:FF:000001">
    <property type="entry name" value="Formate--tetrahydrofolate ligase"/>
    <property type="match status" value="1"/>
</dbReference>
<dbReference type="Gene3D" id="3.30.1510.10">
    <property type="entry name" value="Domain 2, N(10)-formyltetrahydrofolate synthetase"/>
    <property type="match status" value="1"/>
</dbReference>
<dbReference type="Gene3D" id="3.10.410.10">
    <property type="entry name" value="Formyltetrahydrofolate synthetase, domain 3"/>
    <property type="match status" value="1"/>
</dbReference>
<dbReference type="Gene3D" id="3.40.50.300">
    <property type="entry name" value="P-loop containing nucleotide triphosphate hydrolases"/>
    <property type="match status" value="1"/>
</dbReference>
<dbReference type="HAMAP" id="MF_01543">
    <property type="entry name" value="FTHFS"/>
    <property type="match status" value="1"/>
</dbReference>
<dbReference type="InterPro" id="IPR000559">
    <property type="entry name" value="Formate_THF_ligase"/>
</dbReference>
<dbReference type="InterPro" id="IPR020628">
    <property type="entry name" value="Formate_THF_ligase_CS"/>
</dbReference>
<dbReference type="InterPro" id="IPR027417">
    <property type="entry name" value="P-loop_NTPase"/>
</dbReference>
<dbReference type="NCBIfam" id="NF010030">
    <property type="entry name" value="PRK13505.1"/>
    <property type="match status" value="1"/>
</dbReference>
<dbReference type="Pfam" id="PF01268">
    <property type="entry name" value="FTHFS"/>
    <property type="match status" value="1"/>
</dbReference>
<dbReference type="SUPFAM" id="SSF52540">
    <property type="entry name" value="P-loop containing nucleoside triphosphate hydrolases"/>
    <property type="match status" value="1"/>
</dbReference>
<dbReference type="PROSITE" id="PS00721">
    <property type="entry name" value="FTHFS_1"/>
    <property type="match status" value="1"/>
</dbReference>
<dbReference type="PROSITE" id="PS00722">
    <property type="entry name" value="FTHFS_2"/>
    <property type="match status" value="1"/>
</dbReference>